<reference key="1">
    <citation type="journal article" date="1996" name="Science">
        <title>Complete genome sequence of the methanogenic archaeon, Methanococcus jannaschii.</title>
        <authorList>
            <person name="Bult C.J."/>
            <person name="White O."/>
            <person name="Olsen G.J."/>
            <person name="Zhou L."/>
            <person name="Fleischmann R.D."/>
            <person name="Sutton G.G."/>
            <person name="Blake J.A."/>
            <person name="FitzGerald L.M."/>
            <person name="Clayton R.A."/>
            <person name="Gocayne J.D."/>
            <person name="Kerlavage A.R."/>
            <person name="Dougherty B.A."/>
            <person name="Tomb J.-F."/>
            <person name="Adams M.D."/>
            <person name="Reich C.I."/>
            <person name="Overbeek R."/>
            <person name="Kirkness E.F."/>
            <person name="Weinstock K.G."/>
            <person name="Merrick J.M."/>
            <person name="Glodek A."/>
            <person name="Scott J.L."/>
            <person name="Geoghagen N.S.M."/>
            <person name="Weidman J.F."/>
            <person name="Fuhrmann J.L."/>
            <person name="Nguyen D."/>
            <person name="Utterback T.R."/>
            <person name="Kelley J.M."/>
            <person name="Peterson J.D."/>
            <person name="Sadow P.W."/>
            <person name="Hanna M.C."/>
            <person name="Cotton M.D."/>
            <person name="Roberts K.M."/>
            <person name="Hurst M.A."/>
            <person name="Kaine B.P."/>
            <person name="Borodovsky M."/>
            <person name="Klenk H.-P."/>
            <person name="Fraser C.M."/>
            <person name="Smith H.O."/>
            <person name="Woese C.R."/>
            <person name="Venter J.C."/>
        </authorList>
    </citation>
    <scope>NUCLEOTIDE SEQUENCE [LARGE SCALE GENOMIC DNA]</scope>
    <source>
        <strain>ATCC 43067 / DSM 2661 / JAL-1 / JCM 10045 / NBRC 100440</strain>
    </source>
</reference>
<proteinExistence type="predicted"/>
<feature type="chain" id="PRO_0000158564" description="Acylphosphatase-like protein MJ1331">
    <location>
        <begin position="1"/>
        <end position="144"/>
    </location>
</feature>
<feature type="domain" description="Acylphosphatase-like" evidence="1">
    <location>
        <begin position="8"/>
        <end position="100"/>
    </location>
</feature>
<protein>
    <recommendedName>
        <fullName>Acylphosphatase-like protein MJ1331</fullName>
    </recommendedName>
</protein>
<name>Y1331_METJA</name>
<gene>
    <name type="ordered locus">MJ1331</name>
</gene>
<sequence length="144" mass="16726">MVASMATTYELRIYGNVECAEFIDKVESLGKLLDVNGVVYVYKDSVRILANFPNEKKRQLFKEIIKDLEDDGGLIKVERIEERDLNTYIEFPNGLNKISTNELKEINKKLDKTISYLENIFNALEKQIKVSEEIRDILKDTFEV</sequence>
<accession>Q58727</accession>
<organism>
    <name type="scientific">Methanocaldococcus jannaschii (strain ATCC 43067 / DSM 2661 / JAL-1 / JCM 10045 / NBRC 100440)</name>
    <name type="common">Methanococcus jannaschii</name>
    <dbReference type="NCBI Taxonomy" id="243232"/>
    <lineage>
        <taxon>Archaea</taxon>
        <taxon>Methanobacteriati</taxon>
        <taxon>Methanobacteriota</taxon>
        <taxon>Methanomada group</taxon>
        <taxon>Methanococci</taxon>
        <taxon>Methanococcales</taxon>
        <taxon>Methanocaldococcaceae</taxon>
        <taxon>Methanocaldococcus</taxon>
    </lineage>
</organism>
<evidence type="ECO:0000255" key="1">
    <source>
        <dbReference type="PROSITE-ProRule" id="PRU00520"/>
    </source>
</evidence>
<keyword id="KW-1185">Reference proteome</keyword>
<dbReference type="EMBL" id="L77117">
    <property type="protein sequence ID" value="AAB99344.1"/>
    <property type="molecule type" value="Genomic_DNA"/>
</dbReference>
<dbReference type="PIR" id="B64466">
    <property type="entry name" value="B64466"/>
</dbReference>
<dbReference type="SMR" id="Q58727"/>
<dbReference type="STRING" id="243232.MJ_1331"/>
<dbReference type="PaxDb" id="243232-MJ_1331"/>
<dbReference type="EnsemblBacteria" id="AAB99344">
    <property type="protein sequence ID" value="AAB99344"/>
    <property type="gene ID" value="MJ_1331"/>
</dbReference>
<dbReference type="KEGG" id="mja:MJ_1331"/>
<dbReference type="eggNOG" id="arCOG01674">
    <property type="taxonomic scope" value="Archaea"/>
</dbReference>
<dbReference type="HOGENOM" id="CLU_1656874_0_0_2"/>
<dbReference type="InParanoid" id="Q58727"/>
<dbReference type="PhylomeDB" id="Q58727"/>
<dbReference type="Proteomes" id="UP000000805">
    <property type="component" value="Chromosome"/>
</dbReference>
<dbReference type="InterPro" id="IPR001792">
    <property type="entry name" value="Acylphosphatase-like_dom"/>
</dbReference>
<dbReference type="PROSITE" id="PS51160">
    <property type="entry name" value="ACYLPHOSPHATASE_3"/>
    <property type="match status" value="1"/>
</dbReference>